<organism>
    <name type="scientific">Salmonella paratyphi A (strain ATCC 9150 / SARB42)</name>
    <dbReference type="NCBI Taxonomy" id="295319"/>
    <lineage>
        <taxon>Bacteria</taxon>
        <taxon>Pseudomonadati</taxon>
        <taxon>Pseudomonadota</taxon>
        <taxon>Gammaproteobacteria</taxon>
        <taxon>Enterobacterales</taxon>
        <taxon>Enterobacteriaceae</taxon>
        <taxon>Salmonella</taxon>
    </lineage>
</organism>
<protein>
    <recommendedName>
        <fullName evidence="1">Protein YceI</fullName>
    </recommendedName>
</protein>
<name>YCEI_SALPA</name>
<proteinExistence type="inferred from homology"/>
<evidence type="ECO:0000255" key="1">
    <source>
        <dbReference type="HAMAP-Rule" id="MF_00780"/>
    </source>
</evidence>
<gene>
    <name evidence="1" type="primary">yceI</name>
    <name type="ordered locus">SPA1694</name>
</gene>
<sequence>MKKNLLGFTLASLLFTTGSAVAAEYKIDKEGQHAFVNFRIQHLGYSWLYGTFKDFDGTFTFDEKNPSADKVNVTINTNSVDTNHAERDKHLRSAEFLNVAKFPQATFTSTSVKKEGDELDITGNLTLNGVTKPVTLEAKLMGQGDDPWGGKRAGFEAEGKIKLKDFNITTDLGPASQEVELIISVEGVQQK</sequence>
<reference key="1">
    <citation type="journal article" date="2004" name="Nat. Genet.">
        <title>Comparison of genome degradation in Paratyphi A and Typhi, human-restricted serovars of Salmonella enterica that cause typhoid.</title>
        <authorList>
            <person name="McClelland M."/>
            <person name="Sanderson K.E."/>
            <person name="Clifton S.W."/>
            <person name="Latreille P."/>
            <person name="Porwollik S."/>
            <person name="Sabo A."/>
            <person name="Meyer R."/>
            <person name="Bieri T."/>
            <person name="Ozersky P."/>
            <person name="McLellan M."/>
            <person name="Harkins C.R."/>
            <person name="Wang C."/>
            <person name="Nguyen C."/>
            <person name="Berghoff A."/>
            <person name="Elliott G."/>
            <person name="Kohlberg S."/>
            <person name="Strong C."/>
            <person name="Du F."/>
            <person name="Carter J."/>
            <person name="Kremizki C."/>
            <person name="Layman D."/>
            <person name="Leonard S."/>
            <person name="Sun H."/>
            <person name="Fulton L."/>
            <person name="Nash W."/>
            <person name="Miner T."/>
            <person name="Minx P."/>
            <person name="Delehaunty K."/>
            <person name="Fronick C."/>
            <person name="Magrini V."/>
            <person name="Nhan M."/>
            <person name="Warren W."/>
            <person name="Florea L."/>
            <person name="Spieth J."/>
            <person name="Wilson R.K."/>
        </authorList>
    </citation>
    <scope>NUCLEOTIDE SEQUENCE [LARGE SCALE GENOMIC DNA]</scope>
    <source>
        <strain>ATCC 9150 / SARB42</strain>
    </source>
</reference>
<feature type="signal peptide" evidence="1">
    <location>
        <begin position="1"/>
        <end position="22"/>
    </location>
</feature>
<feature type="chain" id="PRO_0000226324" description="Protein YceI">
    <location>
        <begin position="23"/>
        <end position="191"/>
    </location>
</feature>
<dbReference type="EMBL" id="CP000026">
    <property type="protein sequence ID" value="AAV77618.1"/>
    <property type="molecule type" value="Genomic_DNA"/>
</dbReference>
<dbReference type="RefSeq" id="WP_000739886.1">
    <property type="nucleotide sequence ID" value="NC_006511.1"/>
</dbReference>
<dbReference type="SMR" id="Q5PGX1"/>
<dbReference type="KEGG" id="spt:SPA1694"/>
<dbReference type="HOGENOM" id="CLU_071003_1_2_6"/>
<dbReference type="Proteomes" id="UP000008185">
    <property type="component" value="Chromosome"/>
</dbReference>
<dbReference type="GO" id="GO:0042597">
    <property type="term" value="C:periplasmic space"/>
    <property type="evidence" value="ECO:0007669"/>
    <property type="project" value="UniProtKB-SubCell"/>
</dbReference>
<dbReference type="Gene3D" id="2.40.128.110">
    <property type="entry name" value="Lipid/polyisoprenoid-binding, YceI-like"/>
    <property type="match status" value="1"/>
</dbReference>
<dbReference type="HAMAP" id="MF_00780">
    <property type="entry name" value="UPF0312"/>
    <property type="match status" value="1"/>
</dbReference>
<dbReference type="InterPro" id="IPR007372">
    <property type="entry name" value="Lipid/polyisoprenoid-bd_YceI"/>
</dbReference>
<dbReference type="InterPro" id="IPR036761">
    <property type="entry name" value="TTHA0802/YceI-like_sf"/>
</dbReference>
<dbReference type="InterPro" id="IPR023480">
    <property type="entry name" value="UPF0312/YceI"/>
</dbReference>
<dbReference type="NCBIfam" id="NF002994">
    <property type="entry name" value="PRK03757.1"/>
    <property type="match status" value="1"/>
</dbReference>
<dbReference type="PANTHER" id="PTHR34406">
    <property type="entry name" value="PROTEIN YCEI"/>
    <property type="match status" value="1"/>
</dbReference>
<dbReference type="PANTHER" id="PTHR34406:SF1">
    <property type="entry name" value="PROTEIN YCEI"/>
    <property type="match status" value="1"/>
</dbReference>
<dbReference type="Pfam" id="PF04264">
    <property type="entry name" value="YceI"/>
    <property type="match status" value="1"/>
</dbReference>
<dbReference type="SMART" id="SM00867">
    <property type="entry name" value="YceI"/>
    <property type="match status" value="1"/>
</dbReference>
<dbReference type="SUPFAM" id="SSF101874">
    <property type="entry name" value="YceI-like"/>
    <property type="match status" value="1"/>
</dbReference>
<accession>Q5PGX1</accession>
<comment type="subcellular location">
    <subcellularLocation>
        <location evidence="1">Periplasm</location>
    </subcellularLocation>
</comment>
<comment type="similarity">
    <text evidence="1">Belongs to the UPF0312 family. Type 1 subfamily.</text>
</comment>
<keyword id="KW-0574">Periplasm</keyword>
<keyword id="KW-0732">Signal</keyword>